<protein>
    <recommendedName>
        <fullName evidence="1">Phosphate acyltransferase</fullName>
        <ecNumber evidence="1">2.3.1.274</ecNumber>
    </recommendedName>
    <alternativeName>
        <fullName evidence="1">Acyl-ACP phosphotransacylase</fullName>
    </alternativeName>
    <alternativeName>
        <fullName evidence="1">Acyl-[acyl-carrier-protein]--phosphate acyltransferase</fullName>
    </alternativeName>
    <alternativeName>
        <fullName evidence="1">Phosphate-acyl-ACP acyltransferase</fullName>
    </alternativeName>
</protein>
<dbReference type="EC" id="2.3.1.274" evidence="1"/>
<dbReference type="EMBL" id="CP000247">
    <property type="protein sequence ID" value="ABG69095.1"/>
    <property type="molecule type" value="Genomic_DNA"/>
</dbReference>
<dbReference type="RefSeq" id="WP_000197578.1">
    <property type="nucleotide sequence ID" value="NC_008253.1"/>
</dbReference>
<dbReference type="SMR" id="Q0TIY4"/>
<dbReference type="GeneID" id="93776318"/>
<dbReference type="KEGG" id="ecp:ECP_1082"/>
<dbReference type="HOGENOM" id="CLU_039379_1_0_6"/>
<dbReference type="UniPathway" id="UPA00085"/>
<dbReference type="Proteomes" id="UP000009182">
    <property type="component" value="Chromosome"/>
</dbReference>
<dbReference type="GO" id="GO:0005737">
    <property type="term" value="C:cytoplasm"/>
    <property type="evidence" value="ECO:0007669"/>
    <property type="project" value="UniProtKB-SubCell"/>
</dbReference>
<dbReference type="GO" id="GO:0043811">
    <property type="term" value="F:phosphate:acyl-[acyl carrier protein] acyltransferase activity"/>
    <property type="evidence" value="ECO:0007669"/>
    <property type="project" value="UniProtKB-UniRule"/>
</dbReference>
<dbReference type="GO" id="GO:0006633">
    <property type="term" value="P:fatty acid biosynthetic process"/>
    <property type="evidence" value="ECO:0007669"/>
    <property type="project" value="UniProtKB-UniRule"/>
</dbReference>
<dbReference type="GO" id="GO:0008654">
    <property type="term" value="P:phospholipid biosynthetic process"/>
    <property type="evidence" value="ECO:0007669"/>
    <property type="project" value="UniProtKB-KW"/>
</dbReference>
<dbReference type="FunFam" id="3.40.718.10:FF:000008">
    <property type="entry name" value="Phosphate acyltransferase"/>
    <property type="match status" value="1"/>
</dbReference>
<dbReference type="Gene3D" id="3.40.718.10">
    <property type="entry name" value="Isopropylmalate Dehydrogenase"/>
    <property type="match status" value="1"/>
</dbReference>
<dbReference type="HAMAP" id="MF_00019">
    <property type="entry name" value="PlsX"/>
    <property type="match status" value="1"/>
</dbReference>
<dbReference type="InterPro" id="IPR003664">
    <property type="entry name" value="FA_synthesis"/>
</dbReference>
<dbReference type="InterPro" id="IPR012281">
    <property type="entry name" value="Phospholipid_synth_PlsX-like"/>
</dbReference>
<dbReference type="NCBIfam" id="TIGR00182">
    <property type="entry name" value="plsX"/>
    <property type="match status" value="1"/>
</dbReference>
<dbReference type="PANTHER" id="PTHR30100">
    <property type="entry name" value="FATTY ACID/PHOSPHOLIPID SYNTHESIS PROTEIN PLSX"/>
    <property type="match status" value="1"/>
</dbReference>
<dbReference type="PANTHER" id="PTHR30100:SF1">
    <property type="entry name" value="PHOSPHATE ACYLTRANSFERASE"/>
    <property type="match status" value="1"/>
</dbReference>
<dbReference type="Pfam" id="PF02504">
    <property type="entry name" value="FA_synthesis"/>
    <property type="match status" value="1"/>
</dbReference>
<dbReference type="PIRSF" id="PIRSF002465">
    <property type="entry name" value="Phsphlp_syn_PlsX"/>
    <property type="match status" value="1"/>
</dbReference>
<dbReference type="SUPFAM" id="SSF53659">
    <property type="entry name" value="Isocitrate/Isopropylmalate dehydrogenase-like"/>
    <property type="match status" value="1"/>
</dbReference>
<comment type="function">
    <text evidence="1">Catalyzes the reversible formation of acyl-phosphate (acyl-PO(4)) from acyl-[acyl-carrier-protein] (acyl-ACP). This enzyme utilizes acyl-ACP as fatty acyl donor, but not acyl-CoA.</text>
</comment>
<comment type="catalytic activity">
    <reaction evidence="1">
        <text>a fatty acyl-[ACP] + phosphate = an acyl phosphate + holo-[ACP]</text>
        <dbReference type="Rhea" id="RHEA:42292"/>
        <dbReference type="Rhea" id="RHEA-COMP:9685"/>
        <dbReference type="Rhea" id="RHEA-COMP:14125"/>
        <dbReference type="ChEBI" id="CHEBI:43474"/>
        <dbReference type="ChEBI" id="CHEBI:59918"/>
        <dbReference type="ChEBI" id="CHEBI:64479"/>
        <dbReference type="ChEBI" id="CHEBI:138651"/>
        <dbReference type="EC" id="2.3.1.274"/>
    </reaction>
</comment>
<comment type="pathway">
    <text evidence="1">Lipid metabolism; phospholipid metabolism.</text>
</comment>
<comment type="subunit">
    <text evidence="1">Homodimer. Probably interacts with PlsY.</text>
</comment>
<comment type="subcellular location">
    <subcellularLocation>
        <location evidence="1">Cytoplasm</location>
    </subcellularLocation>
    <text evidence="1">Associated with the membrane possibly through PlsY.</text>
</comment>
<comment type="similarity">
    <text evidence="1">Belongs to the PlsX family.</text>
</comment>
<sequence>MTRLTLALDVMGGDFGPSVTVPAALQALNSNSQLTLLLVGNPDAITPLLAKADFEQRSRLQIIPAQSVIASDARPSQAIRASRGSSMRVALELVKEGRAQACVSAGNTGALMGLAKLLLKPLEGIERPALVTVLPHQQKGKTVVLDLGANVDCDSTMLVQFAIMGSVLAEEVVEIPNPRVALLNIGEEEVKGLDSIRDASAVLKTIPSINYIGYLEANELLTGKTDVLVCDGFTGNVTLKTMEGVVRMFLSLLKSQGEGKKRSWWLLLLKRWLQKSLTRRFSHLNPDQYNGACLLGLRGTVIKSHGAANQRAFAVAIEQAVQAVQRQVPQRIAARLESVYPAGFELLDGGKSGTLR</sequence>
<organism>
    <name type="scientific">Escherichia coli O6:K15:H31 (strain 536 / UPEC)</name>
    <dbReference type="NCBI Taxonomy" id="362663"/>
    <lineage>
        <taxon>Bacteria</taxon>
        <taxon>Pseudomonadati</taxon>
        <taxon>Pseudomonadota</taxon>
        <taxon>Gammaproteobacteria</taxon>
        <taxon>Enterobacterales</taxon>
        <taxon>Enterobacteriaceae</taxon>
        <taxon>Escherichia</taxon>
    </lineage>
</organism>
<accession>Q0TIY4</accession>
<feature type="chain" id="PRO_1000001755" description="Phosphate acyltransferase">
    <location>
        <begin position="1"/>
        <end position="356"/>
    </location>
</feature>
<evidence type="ECO:0000255" key="1">
    <source>
        <dbReference type="HAMAP-Rule" id="MF_00019"/>
    </source>
</evidence>
<gene>
    <name evidence="1" type="primary">plsX</name>
    <name type="ordered locus">ECP_1082</name>
</gene>
<proteinExistence type="inferred from homology"/>
<name>PLSX_ECOL5</name>
<keyword id="KW-0963">Cytoplasm</keyword>
<keyword id="KW-0444">Lipid biosynthesis</keyword>
<keyword id="KW-0443">Lipid metabolism</keyword>
<keyword id="KW-0594">Phospholipid biosynthesis</keyword>
<keyword id="KW-1208">Phospholipid metabolism</keyword>
<keyword id="KW-0808">Transferase</keyword>
<reference key="1">
    <citation type="journal article" date="2006" name="Mol. Microbiol.">
        <title>Role of pathogenicity island-associated integrases in the genome plasticity of uropathogenic Escherichia coli strain 536.</title>
        <authorList>
            <person name="Hochhut B."/>
            <person name="Wilde C."/>
            <person name="Balling G."/>
            <person name="Middendorf B."/>
            <person name="Dobrindt U."/>
            <person name="Brzuszkiewicz E."/>
            <person name="Gottschalk G."/>
            <person name="Carniel E."/>
            <person name="Hacker J."/>
        </authorList>
    </citation>
    <scope>NUCLEOTIDE SEQUENCE [LARGE SCALE GENOMIC DNA]</scope>
    <source>
        <strain>536 / UPEC</strain>
    </source>
</reference>